<sequence length="202" mass="22727">MSVKYIATSKLPTPWGVFAMHGFEETATGKEHVALTFGQLDPTEPMLGRIHSECLTGDALFSLRCDCGFQLQAAMQSIAEQGQGFLLYLRQEGRGIGLLNKIRAYELQDAGANTVEANERLGFEADMRKYDMILPMLTQIGVTKVKLMTNNPRKVMAMQNMGIEVAERIPLQVGKNRYNESYLKTKSTELGHMMSEYHFHDE</sequence>
<proteinExistence type="inferred from homology"/>
<comment type="function">
    <text evidence="1">Catalyzes the conversion of GTP to 2,5-diamino-6-ribosylamino-4(3H)-pyrimidinone 5'-phosphate (DARP), formate and pyrophosphate.</text>
</comment>
<comment type="catalytic activity">
    <reaction evidence="1">
        <text>GTP + 4 H2O = 2,5-diamino-6-hydroxy-4-(5-phosphoribosylamino)-pyrimidine + formate + 2 phosphate + 3 H(+)</text>
        <dbReference type="Rhea" id="RHEA:23704"/>
        <dbReference type="ChEBI" id="CHEBI:15377"/>
        <dbReference type="ChEBI" id="CHEBI:15378"/>
        <dbReference type="ChEBI" id="CHEBI:15740"/>
        <dbReference type="ChEBI" id="CHEBI:37565"/>
        <dbReference type="ChEBI" id="CHEBI:43474"/>
        <dbReference type="ChEBI" id="CHEBI:58614"/>
        <dbReference type="EC" id="3.5.4.25"/>
    </reaction>
</comment>
<comment type="cofactor">
    <cofactor evidence="1">
        <name>Zn(2+)</name>
        <dbReference type="ChEBI" id="CHEBI:29105"/>
    </cofactor>
    <text evidence="1">Binds 1 zinc ion per subunit.</text>
</comment>
<comment type="pathway">
    <text evidence="1">Cofactor biosynthesis; riboflavin biosynthesis; 5-amino-6-(D-ribitylamino)uracil from GTP: step 1/4.</text>
</comment>
<comment type="similarity">
    <text evidence="1">Belongs to the GTP cyclohydrolase II family.</text>
</comment>
<organism>
    <name type="scientific">Shewanella frigidimarina (strain NCIMB 400)</name>
    <dbReference type="NCBI Taxonomy" id="318167"/>
    <lineage>
        <taxon>Bacteria</taxon>
        <taxon>Pseudomonadati</taxon>
        <taxon>Pseudomonadota</taxon>
        <taxon>Gammaproteobacteria</taxon>
        <taxon>Alteromonadales</taxon>
        <taxon>Shewanellaceae</taxon>
        <taxon>Shewanella</taxon>
    </lineage>
</organism>
<keyword id="KW-0342">GTP-binding</keyword>
<keyword id="KW-0378">Hydrolase</keyword>
<keyword id="KW-0479">Metal-binding</keyword>
<keyword id="KW-0547">Nucleotide-binding</keyword>
<keyword id="KW-1185">Reference proteome</keyword>
<keyword id="KW-0686">Riboflavin biosynthesis</keyword>
<keyword id="KW-0862">Zinc</keyword>
<reference key="1">
    <citation type="submission" date="2006-08" db="EMBL/GenBank/DDBJ databases">
        <title>Complete sequence of Shewanella frigidimarina NCIMB 400.</title>
        <authorList>
            <consortium name="US DOE Joint Genome Institute"/>
            <person name="Copeland A."/>
            <person name="Lucas S."/>
            <person name="Lapidus A."/>
            <person name="Barry K."/>
            <person name="Detter J.C."/>
            <person name="Glavina del Rio T."/>
            <person name="Hammon N."/>
            <person name="Israni S."/>
            <person name="Dalin E."/>
            <person name="Tice H."/>
            <person name="Pitluck S."/>
            <person name="Fredrickson J.K."/>
            <person name="Kolker E."/>
            <person name="McCuel L.A."/>
            <person name="DiChristina T."/>
            <person name="Nealson K.H."/>
            <person name="Newman D."/>
            <person name="Tiedje J.M."/>
            <person name="Zhou J."/>
            <person name="Romine M.F."/>
            <person name="Culley D.E."/>
            <person name="Serres M."/>
            <person name="Chertkov O."/>
            <person name="Brettin T."/>
            <person name="Bruce D."/>
            <person name="Han C."/>
            <person name="Tapia R."/>
            <person name="Gilna P."/>
            <person name="Schmutz J."/>
            <person name="Larimer F."/>
            <person name="Land M."/>
            <person name="Hauser L."/>
            <person name="Kyrpides N."/>
            <person name="Mikhailova N."/>
            <person name="Richardson P."/>
        </authorList>
    </citation>
    <scope>NUCLEOTIDE SEQUENCE [LARGE SCALE GENOMIC DNA]</scope>
    <source>
        <strain>NCIMB 400</strain>
    </source>
</reference>
<dbReference type="EC" id="3.5.4.25" evidence="1"/>
<dbReference type="EMBL" id="CP000447">
    <property type="protein sequence ID" value="ABI72283.1"/>
    <property type="molecule type" value="Genomic_DNA"/>
</dbReference>
<dbReference type="RefSeq" id="WP_011637892.1">
    <property type="nucleotide sequence ID" value="NC_008345.1"/>
</dbReference>
<dbReference type="SMR" id="Q080N2"/>
<dbReference type="STRING" id="318167.Sfri_2438"/>
<dbReference type="KEGG" id="sfr:Sfri_2438"/>
<dbReference type="eggNOG" id="COG0807">
    <property type="taxonomic scope" value="Bacteria"/>
</dbReference>
<dbReference type="HOGENOM" id="CLU_020273_2_1_6"/>
<dbReference type="OrthoDB" id="9793111at2"/>
<dbReference type="UniPathway" id="UPA00275">
    <property type="reaction ID" value="UER00400"/>
</dbReference>
<dbReference type="Proteomes" id="UP000000684">
    <property type="component" value="Chromosome"/>
</dbReference>
<dbReference type="GO" id="GO:0005829">
    <property type="term" value="C:cytosol"/>
    <property type="evidence" value="ECO:0007669"/>
    <property type="project" value="TreeGrafter"/>
</dbReference>
<dbReference type="GO" id="GO:0005525">
    <property type="term" value="F:GTP binding"/>
    <property type="evidence" value="ECO:0007669"/>
    <property type="project" value="UniProtKB-KW"/>
</dbReference>
<dbReference type="GO" id="GO:0003935">
    <property type="term" value="F:GTP cyclohydrolase II activity"/>
    <property type="evidence" value="ECO:0007669"/>
    <property type="project" value="UniProtKB-UniRule"/>
</dbReference>
<dbReference type="GO" id="GO:0008270">
    <property type="term" value="F:zinc ion binding"/>
    <property type="evidence" value="ECO:0007669"/>
    <property type="project" value="UniProtKB-UniRule"/>
</dbReference>
<dbReference type="GO" id="GO:0009231">
    <property type="term" value="P:riboflavin biosynthetic process"/>
    <property type="evidence" value="ECO:0007669"/>
    <property type="project" value="UniProtKB-UniRule"/>
</dbReference>
<dbReference type="CDD" id="cd00641">
    <property type="entry name" value="GTP_cyclohydro2"/>
    <property type="match status" value="1"/>
</dbReference>
<dbReference type="FunFam" id="3.40.50.10990:FF:000002">
    <property type="entry name" value="GTP cyclohydrolase-2"/>
    <property type="match status" value="1"/>
</dbReference>
<dbReference type="Gene3D" id="3.40.50.10990">
    <property type="entry name" value="GTP cyclohydrolase II"/>
    <property type="match status" value="1"/>
</dbReference>
<dbReference type="HAMAP" id="MF_00179">
    <property type="entry name" value="RibA"/>
    <property type="match status" value="1"/>
</dbReference>
<dbReference type="InterPro" id="IPR032677">
    <property type="entry name" value="GTP_cyclohydro_II"/>
</dbReference>
<dbReference type="InterPro" id="IPR000926">
    <property type="entry name" value="RibA"/>
</dbReference>
<dbReference type="InterPro" id="IPR036144">
    <property type="entry name" value="RibA-like_sf"/>
</dbReference>
<dbReference type="NCBIfam" id="NF001591">
    <property type="entry name" value="PRK00393.1"/>
    <property type="match status" value="1"/>
</dbReference>
<dbReference type="NCBIfam" id="TIGR00505">
    <property type="entry name" value="ribA"/>
    <property type="match status" value="1"/>
</dbReference>
<dbReference type="PANTHER" id="PTHR21327:SF18">
    <property type="entry name" value="3,4-DIHYDROXY-2-BUTANONE 4-PHOSPHATE SYNTHASE"/>
    <property type="match status" value="1"/>
</dbReference>
<dbReference type="PANTHER" id="PTHR21327">
    <property type="entry name" value="GTP CYCLOHYDROLASE II-RELATED"/>
    <property type="match status" value="1"/>
</dbReference>
<dbReference type="Pfam" id="PF00925">
    <property type="entry name" value="GTP_cyclohydro2"/>
    <property type="match status" value="1"/>
</dbReference>
<dbReference type="SUPFAM" id="SSF142695">
    <property type="entry name" value="RibA-like"/>
    <property type="match status" value="1"/>
</dbReference>
<feature type="chain" id="PRO_1000040582" description="GTP cyclohydrolase-2">
    <location>
        <begin position="1"/>
        <end position="202"/>
    </location>
</feature>
<feature type="active site" description="Proton acceptor" evidence="1">
    <location>
        <position position="126"/>
    </location>
</feature>
<feature type="active site" description="Nucleophile" evidence="1">
    <location>
        <position position="128"/>
    </location>
</feature>
<feature type="binding site" evidence="1">
    <location>
        <begin position="49"/>
        <end position="53"/>
    </location>
    <ligand>
        <name>GTP</name>
        <dbReference type="ChEBI" id="CHEBI:37565"/>
    </ligand>
</feature>
<feature type="binding site" evidence="1">
    <location>
        <position position="54"/>
    </location>
    <ligand>
        <name>Zn(2+)</name>
        <dbReference type="ChEBI" id="CHEBI:29105"/>
        <note>catalytic</note>
    </ligand>
</feature>
<feature type="binding site" evidence="1">
    <location>
        <position position="65"/>
    </location>
    <ligand>
        <name>Zn(2+)</name>
        <dbReference type="ChEBI" id="CHEBI:29105"/>
        <note>catalytic</note>
    </ligand>
</feature>
<feature type="binding site" evidence="1">
    <location>
        <position position="67"/>
    </location>
    <ligand>
        <name>Zn(2+)</name>
        <dbReference type="ChEBI" id="CHEBI:29105"/>
        <note>catalytic</note>
    </ligand>
</feature>
<feature type="binding site" evidence="1">
    <location>
        <position position="70"/>
    </location>
    <ligand>
        <name>GTP</name>
        <dbReference type="ChEBI" id="CHEBI:37565"/>
    </ligand>
</feature>
<feature type="binding site" evidence="1">
    <location>
        <begin position="92"/>
        <end position="94"/>
    </location>
    <ligand>
        <name>GTP</name>
        <dbReference type="ChEBI" id="CHEBI:37565"/>
    </ligand>
</feature>
<feature type="binding site" evidence="1">
    <location>
        <position position="114"/>
    </location>
    <ligand>
        <name>GTP</name>
        <dbReference type="ChEBI" id="CHEBI:37565"/>
    </ligand>
</feature>
<feature type="binding site" evidence="1">
    <location>
        <position position="149"/>
    </location>
    <ligand>
        <name>GTP</name>
        <dbReference type="ChEBI" id="CHEBI:37565"/>
    </ligand>
</feature>
<feature type="binding site" evidence="1">
    <location>
        <position position="154"/>
    </location>
    <ligand>
        <name>GTP</name>
        <dbReference type="ChEBI" id="CHEBI:37565"/>
    </ligand>
</feature>
<accession>Q080N2</accession>
<name>RIBA_SHEFN</name>
<evidence type="ECO:0000255" key="1">
    <source>
        <dbReference type="HAMAP-Rule" id="MF_00179"/>
    </source>
</evidence>
<protein>
    <recommendedName>
        <fullName evidence="1">GTP cyclohydrolase-2</fullName>
        <ecNumber evidence="1">3.5.4.25</ecNumber>
    </recommendedName>
    <alternativeName>
        <fullName evidence="1">GTP cyclohydrolase II</fullName>
    </alternativeName>
</protein>
<gene>
    <name evidence="1" type="primary">ribA</name>
    <name type="ordered locus">Sfri_2438</name>
</gene>